<keyword id="KW-0030">Aminoacyl-tRNA synthetase</keyword>
<keyword id="KW-0067">ATP-binding</keyword>
<keyword id="KW-0963">Cytoplasm</keyword>
<keyword id="KW-0436">Ligase</keyword>
<keyword id="KW-0479">Metal-binding</keyword>
<keyword id="KW-0547">Nucleotide-binding</keyword>
<keyword id="KW-0648">Protein biosynthesis</keyword>
<keyword id="KW-0862">Zinc</keyword>
<gene>
    <name evidence="1" type="primary">ileS</name>
    <name type="ordered locus">CTL0274</name>
</gene>
<evidence type="ECO:0000255" key="1">
    <source>
        <dbReference type="HAMAP-Rule" id="MF_02003"/>
    </source>
</evidence>
<dbReference type="EC" id="6.1.1.5" evidence="1"/>
<dbReference type="EMBL" id="AM884176">
    <property type="protein sequence ID" value="CAP03713.1"/>
    <property type="molecule type" value="Genomic_DNA"/>
</dbReference>
<dbReference type="RefSeq" id="WP_009873497.1">
    <property type="nucleotide sequence ID" value="NC_010287.1"/>
</dbReference>
<dbReference type="RefSeq" id="YP_001654358.1">
    <property type="nucleotide sequence ID" value="NC_010287.1"/>
</dbReference>
<dbReference type="SMR" id="B0B9C6"/>
<dbReference type="KEGG" id="ctb:CTL0274"/>
<dbReference type="PATRIC" id="fig|471472.4.peg.298"/>
<dbReference type="HOGENOM" id="CLU_001493_1_1_0"/>
<dbReference type="Proteomes" id="UP001154402">
    <property type="component" value="Chromosome"/>
</dbReference>
<dbReference type="GO" id="GO:0005737">
    <property type="term" value="C:cytoplasm"/>
    <property type="evidence" value="ECO:0007669"/>
    <property type="project" value="UniProtKB-SubCell"/>
</dbReference>
<dbReference type="GO" id="GO:0002161">
    <property type="term" value="F:aminoacyl-tRNA deacylase activity"/>
    <property type="evidence" value="ECO:0007669"/>
    <property type="project" value="InterPro"/>
</dbReference>
<dbReference type="GO" id="GO:0005524">
    <property type="term" value="F:ATP binding"/>
    <property type="evidence" value="ECO:0007669"/>
    <property type="project" value="UniProtKB-UniRule"/>
</dbReference>
<dbReference type="GO" id="GO:0004822">
    <property type="term" value="F:isoleucine-tRNA ligase activity"/>
    <property type="evidence" value="ECO:0007669"/>
    <property type="project" value="UniProtKB-UniRule"/>
</dbReference>
<dbReference type="GO" id="GO:0000049">
    <property type="term" value="F:tRNA binding"/>
    <property type="evidence" value="ECO:0007669"/>
    <property type="project" value="InterPro"/>
</dbReference>
<dbReference type="GO" id="GO:0008270">
    <property type="term" value="F:zinc ion binding"/>
    <property type="evidence" value="ECO:0007669"/>
    <property type="project" value="UniProtKB-UniRule"/>
</dbReference>
<dbReference type="GO" id="GO:0006428">
    <property type="term" value="P:isoleucyl-tRNA aminoacylation"/>
    <property type="evidence" value="ECO:0007669"/>
    <property type="project" value="UniProtKB-UniRule"/>
</dbReference>
<dbReference type="CDD" id="cd07961">
    <property type="entry name" value="Anticodon_Ia_Ile_ABEc"/>
    <property type="match status" value="1"/>
</dbReference>
<dbReference type="CDD" id="cd00818">
    <property type="entry name" value="IleRS_core"/>
    <property type="match status" value="1"/>
</dbReference>
<dbReference type="FunFam" id="3.40.50.620:FF:000241">
    <property type="entry name" value="Isoleucine--tRNA ligase"/>
    <property type="match status" value="1"/>
</dbReference>
<dbReference type="FunFam" id="3.40.50.620:FF:000133">
    <property type="entry name" value="Isoleucyl-tRNA synthetase, cytoplasmic"/>
    <property type="match status" value="1"/>
</dbReference>
<dbReference type="Gene3D" id="3.40.50.620">
    <property type="entry name" value="HUPs"/>
    <property type="match status" value="2"/>
</dbReference>
<dbReference type="Gene3D" id="1.10.730.10">
    <property type="entry name" value="Isoleucyl-tRNA Synthetase, Domain 1"/>
    <property type="match status" value="1"/>
</dbReference>
<dbReference type="HAMAP" id="MF_02003">
    <property type="entry name" value="Ile_tRNA_synth_type2"/>
    <property type="match status" value="1"/>
</dbReference>
<dbReference type="InterPro" id="IPR001412">
    <property type="entry name" value="aa-tRNA-synth_I_CS"/>
</dbReference>
<dbReference type="InterPro" id="IPR002300">
    <property type="entry name" value="aa-tRNA-synth_Ia"/>
</dbReference>
<dbReference type="InterPro" id="IPR033709">
    <property type="entry name" value="Anticodon_Ile_ABEc"/>
</dbReference>
<dbReference type="InterPro" id="IPR002301">
    <property type="entry name" value="Ile-tRNA-ligase"/>
</dbReference>
<dbReference type="InterPro" id="IPR023586">
    <property type="entry name" value="Ile-tRNA-ligase_type2"/>
</dbReference>
<dbReference type="InterPro" id="IPR013155">
    <property type="entry name" value="M/V/L/I-tRNA-synth_anticd-bd"/>
</dbReference>
<dbReference type="InterPro" id="IPR014729">
    <property type="entry name" value="Rossmann-like_a/b/a_fold"/>
</dbReference>
<dbReference type="InterPro" id="IPR009080">
    <property type="entry name" value="tRNAsynth_Ia_anticodon-bd"/>
</dbReference>
<dbReference type="InterPro" id="IPR009008">
    <property type="entry name" value="Val/Leu/Ile-tRNA-synth_edit"/>
</dbReference>
<dbReference type="NCBIfam" id="TIGR00392">
    <property type="entry name" value="ileS"/>
    <property type="match status" value="1"/>
</dbReference>
<dbReference type="PANTHER" id="PTHR42780:SF1">
    <property type="entry name" value="ISOLEUCINE--TRNA LIGASE, CYTOPLASMIC"/>
    <property type="match status" value="1"/>
</dbReference>
<dbReference type="PANTHER" id="PTHR42780">
    <property type="entry name" value="SOLEUCYL-TRNA SYNTHETASE"/>
    <property type="match status" value="1"/>
</dbReference>
<dbReference type="Pfam" id="PF08264">
    <property type="entry name" value="Anticodon_1"/>
    <property type="match status" value="1"/>
</dbReference>
<dbReference type="Pfam" id="PF19302">
    <property type="entry name" value="DUF5915"/>
    <property type="match status" value="1"/>
</dbReference>
<dbReference type="Pfam" id="PF00133">
    <property type="entry name" value="tRNA-synt_1"/>
    <property type="match status" value="1"/>
</dbReference>
<dbReference type="PRINTS" id="PR00984">
    <property type="entry name" value="TRNASYNTHILE"/>
</dbReference>
<dbReference type="SUPFAM" id="SSF47323">
    <property type="entry name" value="Anticodon-binding domain of a subclass of class I aminoacyl-tRNA synthetases"/>
    <property type="match status" value="2"/>
</dbReference>
<dbReference type="SUPFAM" id="SSF52374">
    <property type="entry name" value="Nucleotidylyl transferase"/>
    <property type="match status" value="1"/>
</dbReference>
<dbReference type="SUPFAM" id="SSF50677">
    <property type="entry name" value="ValRS/IleRS/LeuRS editing domain"/>
    <property type="match status" value="1"/>
</dbReference>
<dbReference type="PROSITE" id="PS00178">
    <property type="entry name" value="AA_TRNA_LIGASE_I"/>
    <property type="match status" value="1"/>
</dbReference>
<feature type="chain" id="PRO_1000216253" description="Isoleucine--tRNA ligase">
    <location>
        <begin position="1"/>
        <end position="1036"/>
    </location>
</feature>
<feature type="short sequence motif" description="'HIGH' region">
    <location>
        <begin position="46"/>
        <end position="56"/>
    </location>
</feature>
<feature type="short sequence motif" description="'KMSKS' region">
    <location>
        <begin position="589"/>
        <end position="593"/>
    </location>
</feature>
<feature type="binding site" evidence="1">
    <location>
        <position position="592"/>
    </location>
    <ligand>
        <name>ATP</name>
        <dbReference type="ChEBI" id="CHEBI:30616"/>
    </ligand>
</feature>
<name>SYI_CHLT2</name>
<proteinExistence type="inferred from homology"/>
<accession>B0B9C6</accession>
<reference key="1">
    <citation type="journal article" date="2008" name="Genome Res.">
        <title>Chlamydia trachomatis: genome sequence analysis of lymphogranuloma venereum isolates.</title>
        <authorList>
            <person name="Thomson N.R."/>
            <person name="Holden M.T.G."/>
            <person name="Carder C."/>
            <person name="Lennard N."/>
            <person name="Lockey S.J."/>
            <person name="Marsh P."/>
            <person name="Skipp P."/>
            <person name="O'Connor C.D."/>
            <person name="Goodhead I."/>
            <person name="Norbertzcak H."/>
            <person name="Harris B."/>
            <person name="Ormond D."/>
            <person name="Rance R."/>
            <person name="Quail M.A."/>
            <person name="Parkhill J."/>
            <person name="Stephens R.S."/>
            <person name="Clarke I.N."/>
        </authorList>
    </citation>
    <scope>NUCLEOTIDE SEQUENCE [LARGE SCALE GENOMIC DNA]</scope>
    <source>
        <strain>ATCC VR-902B / DSM 19102 / 434/Bu</strain>
    </source>
</reference>
<comment type="function">
    <text evidence="1">Catalyzes the attachment of isoleucine to tRNA(Ile). As IleRS can inadvertently accommodate and process structurally similar amino acids such as valine, to avoid such errors it has two additional distinct tRNA(Ile)-dependent editing activities. One activity is designated as 'pretransfer' editing and involves the hydrolysis of activated Val-AMP. The other activity is designated 'posttransfer' editing and involves deacylation of mischarged Val-tRNA(Ile).</text>
</comment>
<comment type="catalytic activity">
    <reaction evidence="1">
        <text>tRNA(Ile) + L-isoleucine + ATP = L-isoleucyl-tRNA(Ile) + AMP + diphosphate</text>
        <dbReference type="Rhea" id="RHEA:11060"/>
        <dbReference type="Rhea" id="RHEA-COMP:9666"/>
        <dbReference type="Rhea" id="RHEA-COMP:9695"/>
        <dbReference type="ChEBI" id="CHEBI:30616"/>
        <dbReference type="ChEBI" id="CHEBI:33019"/>
        <dbReference type="ChEBI" id="CHEBI:58045"/>
        <dbReference type="ChEBI" id="CHEBI:78442"/>
        <dbReference type="ChEBI" id="CHEBI:78528"/>
        <dbReference type="ChEBI" id="CHEBI:456215"/>
        <dbReference type="EC" id="6.1.1.5"/>
    </reaction>
</comment>
<comment type="cofactor">
    <cofactor evidence="1">
        <name>Zn(2+)</name>
        <dbReference type="ChEBI" id="CHEBI:29105"/>
    </cofactor>
</comment>
<comment type="subunit">
    <text evidence="1">Monomer.</text>
</comment>
<comment type="subcellular location">
    <subcellularLocation>
        <location evidence="1">Cytoplasm</location>
    </subcellularLocation>
</comment>
<comment type="domain">
    <text evidence="1">IleRS has two distinct active sites: one for aminoacylation and one for editing. The misactivated valine is translocated from the active site to the editing site, which sterically excludes the correctly activated isoleucine. The single editing site contains two valyl binding pockets, one specific for each substrate (Val-AMP or Val-tRNA(Ile)).</text>
</comment>
<comment type="similarity">
    <text evidence="1">Belongs to the class-I aminoacyl-tRNA synthetase family. IleS type 2 subfamily.</text>
</comment>
<protein>
    <recommendedName>
        <fullName evidence="1">Isoleucine--tRNA ligase</fullName>
        <ecNumber evidence="1">6.1.1.5</ecNumber>
    </recommendedName>
    <alternativeName>
        <fullName evidence="1">Isoleucyl-tRNA synthetase</fullName>
        <shortName evidence="1">IleRS</shortName>
    </alternativeName>
</protein>
<sequence length="1036" mass="118804">MDNEDKISISAKEEKILSFWKEQDIFQKTLDNREGCPTFSFYDGPPFATGLPHYGHLLAGTIKDVVCRYASMDGHYVPRRFGWDCHGVPVEYEVEKSLGLTEPGAIERFGVANFNEECRKIVFRYADEWKYFVDRIGRWVDFSATWRTMDLSFMESVWWVFRSLYDQGLVYEGTKVVPFSTKLGTPLSNFEAGQNYKEVDDPSVVVKFALQDNQGFLLAWTTTPWTLVSNMALAVHPELTYVRIKDKESGDEYILGQESLPRWFPDRESYEWIGQLSGKSLVGQSYEPLFPYFQDKKELGAFRILPADFIEESEGTGIVHMAPAFGEADFFACQEHNVPLVCPVDNQGCYTAEVKDFVGEYIKSADKGIARRLKNENKLFYQGTVRHRYPFCWRTDSPLIYKAVNSWFVAVEKVKSKMLKANESIHWTPGHIKQGRFGKWLEGARDWAISRNRYWGTPIPIWRSDDGELLVIGSIQELEALSGQKIVDLHRHFIDEIEINQNGKSFRRIPYVFDCWFDSGAMPYAQNHYPFERAEETEACFPADFIAEGLDQTRGWFYTLTVIAAALFDQPAFKNVIVNGIILAEDGNKMSKRLNNYPSPKMIMDAYGADALRLYLLNSVVVKAEDLRFSDKGVESVLKQVLLPLSNALAFYKTYAELYGFDPKETDNIELAEIDRWILSSLYSLLGKTRESMSQYDLHAAVNPFVDFIEDLTNWYIRRSRRRFWDAEDSTDRRAAFSTLYEVLVVFSKVIAPFIPFISEDMYQQLRGETDPESVHLCDFPHVVLEKILPNLERKMQDIREIVALGHSLRKEHKLKVRQPLQNVYIVGSQERMEALAQVGSLIGEELNVKDVHFCSETPEYVTTLIKPNFRTLGKKVGNRLPEIQRALAGLPQEQIQAFMHKGQMVVSLGEETISLDKEDITVSWASAEGFVARSSASFVAVLDCQLTEPLIMEGIARELVNKINTMRRNGKLHVSDRIAIRLHAPVIVQEAFALHKEYICEETLTTSVSVIDYKEGEEWDINGHAVSFVLERVER</sequence>
<organism>
    <name type="scientific">Chlamydia trachomatis serovar L2 (strain ATCC VR-902B / DSM 19102 / 434/Bu)</name>
    <dbReference type="NCBI Taxonomy" id="471472"/>
    <lineage>
        <taxon>Bacteria</taxon>
        <taxon>Pseudomonadati</taxon>
        <taxon>Chlamydiota</taxon>
        <taxon>Chlamydiia</taxon>
        <taxon>Chlamydiales</taxon>
        <taxon>Chlamydiaceae</taxon>
        <taxon>Chlamydia/Chlamydophila group</taxon>
        <taxon>Chlamydia</taxon>
    </lineage>
</organism>